<evidence type="ECO:0000255" key="1">
    <source>
        <dbReference type="PROSITE-ProRule" id="PRU00062"/>
    </source>
</evidence>
<evidence type="ECO:0000255" key="2">
    <source>
        <dbReference type="PROSITE-ProRule" id="PRU00091"/>
    </source>
</evidence>
<evidence type="ECO:0000255" key="3">
    <source>
        <dbReference type="PROSITE-ProRule" id="PRU00145"/>
    </source>
</evidence>
<evidence type="ECO:0000256" key="4">
    <source>
        <dbReference type="SAM" id="MobiDB-lite"/>
    </source>
</evidence>
<evidence type="ECO:0000269" key="5">
    <source>
    </source>
</evidence>
<evidence type="ECO:0000303" key="6">
    <source>
    </source>
</evidence>
<evidence type="ECO:0000303" key="7">
    <source>
    </source>
</evidence>
<evidence type="ECO:0000305" key="8"/>
<evidence type="ECO:0007829" key="9">
    <source>
        <dbReference type="PDB" id="3MPX"/>
    </source>
</evidence>
<name>FGD5_HUMAN</name>
<accession>Q6ZNL6</accession>
<accession>B3KVQ3</accession>
<accession>Q6MZY1</accession>
<accession>Q7Z303</accession>
<accession>Q8IYP3</accession>
<accession>Q8N861</accession>
<accession>Q8N8G4</accession>
<keyword id="KW-0002">3D-structure</keyword>
<keyword id="KW-0025">Alternative splicing</keyword>
<keyword id="KW-1003">Cell membrane</keyword>
<keyword id="KW-0966">Cell projection</keyword>
<keyword id="KW-0963">Cytoplasm</keyword>
<keyword id="KW-0206">Cytoskeleton</keyword>
<keyword id="KW-0256">Endoplasmic reticulum</keyword>
<keyword id="KW-0967">Endosome</keyword>
<keyword id="KW-0333">Golgi apparatus</keyword>
<keyword id="KW-0344">Guanine-nucleotide releasing factor</keyword>
<keyword id="KW-0472">Membrane</keyword>
<keyword id="KW-0479">Metal-binding</keyword>
<keyword id="KW-1267">Proteomics identification</keyword>
<keyword id="KW-1185">Reference proteome</keyword>
<keyword id="KW-0677">Repeat</keyword>
<keyword id="KW-0862">Zinc</keyword>
<keyword id="KW-0863">Zinc-finger</keyword>
<comment type="function">
    <text evidence="5">Activates CDC42, a member of the Ras-like family of Rho- and Rac proteins, by exchanging bound GDP for free GTP. Mediates VEGF-induced CDC42 activation. May regulate proangiogenic action of VEGF in vascular endothelial cells, including network formation, directional movement and proliferation. May play a role in regulating the actin cytoskeleton and cell shape.</text>
</comment>
<comment type="interaction">
    <interactant intactId="EBI-7962481">
        <id>Q6ZNL6</id>
    </interactant>
    <interactant intactId="EBI-718729">
        <id>P55212</id>
        <label>CASP6</label>
    </interactant>
    <organismsDiffer>false</organismsDiffer>
    <experiments>3</experiments>
</comment>
<comment type="interaction">
    <interactant intactId="EBI-7962481">
        <id>Q6ZNL6</id>
    </interactant>
    <interactant intactId="EBI-745535">
        <id>Q8NI60</id>
        <label>COQ8A</label>
    </interactant>
    <organismsDiffer>false</organismsDiffer>
    <experiments>3</experiments>
</comment>
<comment type="interaction">
    <interactant intactId="EBI-7962481">
        <id>Q6ZNL6</id>
    </interactant>
    <interactant intactId="EBI-21591415">
        <id>P13473-2</id>
        <label>LAMP2</label>
    </interactant>
    <organismsDiffer>false</organismsDiffer>
    <experiments>3</experiments>
</comment>
<comment type="interaction">
    <interactant intactId="EBI-7962481">
        <id>Q6ZNL6</id>
    </interactant>
    <interactant intactId="EBI-5280197">
        <id>O75400-2</id>
        <label>PRPF40A</label>
    </interactant>
    <organismsDiffer>false</organismsDiffer>
    <experiments>3</experiments>
</comment>
<comment type="interaction">
    <interactant intactId="EBI-7962481">
        <id>Q6ZNL6</id>
    </interactant>
    <interactant intactId="EBI-286642">
        <id>P62826</id>
        <label>RAN</label>
    </interactant>
    <organismsDiffer>false</organismsDiffer>
    <experiments>3</experiments>
</comment>
<comment type="interaction">
    <interactant intactId="EBI-7962481">
        <id>Q6ZNL6</id>
    </interactant>
    <interactant intactId="EBI-349968">
        <id>O43463</id>
        <label>SUV39H1</label>
    </interactant>
    <organismsDiffer>false</organismsDiffer>
    <experiments>2</experiments>
</comment>
<comment type="subcellular location">
    <subcellularLocation>
        <location evidence="5">Cytoplasm</location>
        <location evidence="5">Cytoskeleton</location>
    </subcellularLocation>
    <subcellularLocation>
        <location evidence="5">Cell projection</location>
        <location evidence="5">Ruffle membrane</location>
    </subcellularLocation>
    <subcellularLocation>
        <location evidence="5">Endoplasmic reticulum</location>
    </subcellularLocation>
    <subcellularLocation>
        <location evidence="5">Golgi apparatus</location>
    </subcellularLocation>
    <subcellularLocation>
        <location evidence="5">Early endosome</location>
    </subcellularLocation>
    <text>In peripheral membrane ruffles, colocalizes with F-actin. In confluent HUVECs, detected at cell-cell-contact sites where it colocalizes with vascular endothelial cadherin/CDH5.</text>
</comment>
<comment type="alternative products">
    <event type="alternative splicing"/>
    <isoform>
        <id>Q6ZNL6-1</id>
        <name>1</name>
        <sequence type="displayed"/>
    </isoform>
    <isoform>
        <id>Q6ZNL6-2</id>
        <name>2</name>
        <sequence type="described" ref="VSP_013088"/>
    </isoform>
</comment>
<comment type="tissue specificity">
    <text evidence="5">Expressed in endothelial cells (at protein level).</text>
</comment>
<comment type="sequence caution" evidence="8">
    <conflict type="erroneous initiation">
        <sequence resource="EMBL-CDS" id="BAC04878"/>
    </conflict>
    <text>Truncated N-terminus.</text>
</comment>
<comment type="sequence caution" evidence="8">
    <conflict type="erroneous initiation">
        <sequence resource="EMBL-CDS" id="BAC04989"/>
    </conflict>
    <text>Truncated N-terminus.</text>
</comment>
<comment type="sequence caution" evidence="8">
    <conflict type="frameshift">
        <sequence resource="EMBL-CDS" id="BAC85128"/>
    </conflict>
</comment>
<comment type="sequence caution" evidence="8">
    <conflict type="erroneous termination">
        <sequence resource="EMBL-CDS" id="CAD98090"/>
    </conflict>
    <text>Truncated C-terminus.</text>
</comment>
<proteinExistence type="evidence at protein level"/>
<protein>
    <recommendedName>
        <fullName>FYVE, RhoGEF and PH domain-containing protein 5</fullName>
    </recommendedName>
    <alternativeName>
        <fullName>Zinc finger FYVE domain-containing protein 23</fullName>
    </alternativeName>
</protein>
<dbReference type="EMBL" id="AK096856">
    <property type="protein sequence ID" value="BAC04878.1"/>
    <property type="status" value="ALT_INIT"/>
    <property type="molecule type" value="mRNA"/>
</dbReference>
<dbReference type="EMBL" id="AK097276">
    <property type="protein sequence ID" value="BAC04989.1"/>
    <property type="status" value="ALT_INIT"/>
    <property type="molecule type" value="mRNA"/>
</dbReference>
<dbReference type="EMBL" id="AK131078">
    <property type="protein sequence ID" value="BAC85128.1"/>
    <property type="status" value="ALT_FRAME"/>
    <property type="molecule type" value="mRNA"/>
</dbReference>
<dbReference type="EMBL" id="AK123054">
    <property type="protein sequence ID" value="BAG53865.1"/>
    <property type="molecule type" value="mRNA"/>
</dbReference>
<dbReference type="EMBL" id="AC087591">
    <property type="status" value="NOT_ANNOTATED_CDS"/>
    <property type="molecule type" value="Genomic_DNA"/>
</dbReference>
<dbReference type="EMBL" id="AC090954">
    <property type="status" value="NOT_ANNOTATED_CDS"/>
    <property type="molecule type" value="Genomic_DNA"/>
</dbReference>
<dbReference type="EMBL" id="BC035364">
    <property type="protein sequence ID" value="AAH35364.1"/>
    <property type="molecule type" value="mRNA"/>
</dbReference>
<dbReference type="EMBL" id="BF989107">
    <property type="status" value="NOT_ANNOTATED_CDS"/>
    <property type="molecule type" value="mRNA"/>
</dbReference>
<dbReference type="EMBL" id="BX640820">
    <property type="protein sequence ID" value="CAE45896.2"/>
    <property type="molecule type" value="Transcribed_RNA"/>
</dbReference>
<dbReference type="EMBL" id="BX538312">
    <property type="protein sequence ID" value="CAD98090.1"/>
    <property type="status" value="ALT_SEQ"/>
    <property type="molecule type" value="mRNA"/>
</dbReference>
<dbReference type="CCDS" id="CCDS46767.1">
    <molecule id="Q6ZNL6-1"/>
</dbReference>
<dbReference type="RefSeq" id="NP_689749.3">
    <molecule id="Q6ZNL6-1"/>
    <property type="nucleotide sequence ID" value="NM_152536.3"/>
</dbReference>
<dbReference type="PDB" id="3MPX">
    <property type="method" value="X-ray"/>
    <property type="resolution" value="2.80 A"/>
    <property type="chains" value="A=889-1304"/>
</dbReference>
<dbReference type="PDBsum" id="3MPX"/>
<dbReference type="SMR" id="Q6ZNL6"/>
<dbReference type="BioGRID" id="127439">
    <property type="interactions" value="214"/>
</dbReference>
<dbReference type="FunCoup" id="Q6ZNL6">
    <property type="interactions" value="594"/>
</dbReference>
<dbReference type="IntAct" id="Q6ZNL6">
    <property type="interactions" value="21"/>
</dbReference>
<dbReference type="MINT" id="Q6ZNL6"/>
<dbReference type="STRING" id="9606.ENSP00000285046"/>
<dbReference type="GlyGen" id="Q6ZNL6">
    <property type="glycosylation" value="3 sites, 1 O-linked glycan (3 sites)"/>
</dbReference>
<dbReference type="iPTMnet" id="Q6ZNL6"/>
<dbReference type="PhosphoSitePlus" id="Q6ZNL6"/>
<dbReference type="BioMuta" id="FGD5"/>
<dbReference type="DMDM" id="296439343"/>
<dbReference type="jPOST" id="Q6ZNL6"/>
<dbReference type="MassIVE" id="Q6ZNL6"/>
<dbReference type="PaxDb" id="9606-ENSP00000285046"/>
<dbReference type="PeptideAtlas" id="Q6ZNL6"/>
<dbReference type="ProteomicsDB" id="68034">
    <molecule id="Q6ZNL6-1"/>
</dbReference>
<dbReference type="ProteomicsDB" id="68035">
    <molecule id="Q6ZNL6-2"/>
</dbReference>
<dbReference type="Antibodypedia" id="5976">
    <property type="antibodies" value="114 antibodies from 20 providers"/>
</dbReference>
<dbReference type="DNASU" id="152273"/>
<dbReference type="Ensembl" id="ENST00000285046.10">
    <molecule id="Q6ZNL6-1"/>
    <property type="protein sequence ID" value="ENSP00000285046.5"/>
    <property type="gene ID" value="ENSG00000154783.12"/>
</dbReference>
<dbReference type="GeneID" id="152273"/>
<dbReference type="KEGG" id="hsa:152273"/>
<dbReference type="MANE-Select" id="ENST00000285046.10">
    <property type="protein sequence ID" value="ENSP00000285046.5"/>
    <property type="RefSeq nucleotide sequence ID" value="NM_152536.4"/>
    <property type="RefSeq protein sequence ID" value="NP_689749.3"/>
</dbReference>
<dbReference type="UCSC" id="uc003bzc.4">
    <molecule id="Q6ZNL6-1"/>
    <property type="organism name" value="human"/>
</dbReference>
<dbReference type="AGR" id="HGNC:19117"/>
<dbReference type="CTD" id="152273"/>
<dbReference type="DisGeNET" id="152273"/>
<dbReference type="GeneCards" id="FGD5"/>
<dbReference type="HGNC" id="HGNC:19117">
    <property type="gene designation" value="FGD5"/>
</dbReference>
<dbReference type="HPA" id="ENSG00000154783">
    <property type="expression patterns" value="Low tissue specificity"/>
</dbReference>
<dbReference type="MIM" id="614788">
    <property type="type" value="gene"/>
</dbReference>
<dbReference type="neXtProt" id="NX_Q6ZNL6"/>
<dbReference type="OpenTargets" id="ENSG00000154783"/>
<dbReference type="PharmGKB" id="PA134874843"/>
<dbReference type="VEuPathDB" id="HostDB:ENSG00000154783"/>
<dbReference type="eggNOG" id="KOG1729">
    <property type="taxonomic scope" value="Eukaryota"/>
</dbReference>
<dbReference type="eggNOG" id="KOG3531">
    <property type="taxonomic scope" value="Eukaryota"/>
</dbReference>
<dbReference type="GeneTree" id="ENSGT00940000157922"/>
<dbReference type="InParanoid" id="Q6ZNL6"/>
<dbReference type="OMA" id="LTNPYVM"/>
<dbReference type="OrthoDB" id="245697at2759"/>
<dbReference type="PAN-GO" id="Q6ZNL6">
    <property type="GO annotations" value="1 GO annotation based on evolutionary models"/>
</dbReference>
<dbReference type="PhylomeDB" id="Q6ZNL6"/>
<dbReference type="TreeFam" id="TF343077"/>
<dbReference type="PathwayCommons" id="Q6ZNL6"/>
<dbReference type="Reactome" id="R-HSA-9013149">
    <property type="pathway name" value="RAC1 GTPase cycle"/>
</dbReference>
<dbReference type="SignaLink" id="Q6ZNL6"/>
<dbReference type="SIGNOR" id="Q6ZNL6"/>
<dbReference type="BioGRID-ORCS" id="152273">
    <property type="hits" value="17 hits in 1143 CRISPR screens"/>
</dbReference>
<dbReference type="ChiTaRS" id="FGD5">
    <property type="organism name" value="human"/>
</dbReference>
<dbReference type="EvolutionaryTrace" id="Q6ZNL6"/>
<dbReference type="GenomeRNAi" id="152273"/>
<dbReference type="Pharos" id="Q6ZNL6">
    <property type="development level" value="Tbio"/>
</dbReference>
<dbReference type="PRO" id="PR:Q6ZNL6"/>
<dbReference type="Proteomes" id="UP000005640">
    <property type="component" value="Chromosome 3"/>
</dbReference>
<dbReference type="RNAct" id="Q6ZNL6">
    <property type="molecule type" value="protein"/>
</dbReference>
<dbReference type="Bgee" id="ENSG00000154783">
    <property type="expression patterns" value="Expressed in synovial joint and 154 other cell types or tissues"/>
</dbReference>
<dbReference type="ExpressionAtlas" id="Q6ZNL6">
    <property type="expression patterns" value="baseline and differential"/>
</dbReference>
<dbReference type="GO" id="GO:0005737">
    <property type="term" value="C:cytoplasm"/>
    <property type="evidence" value="ECO:0000250"/>
    <property type="project" value="UniProtKB"/>
</dbReference>
<dbReference type="GO" id="GO:0005856">
    <property type="term" value="C:cytoskeleton"/>
    <property type="evidence" value="ECO:0007669"/>
    <property type="project" value="UniProtKB-SubCell"/>
</dbReference>
<dbReference type="GO" id="GO:0005829">
    <property type="term" value="C:cytosol"/>
    <property type="evidence" value="ECO:0000304"/>
    <property type="project" value="Reactome"/>
</dbReference>
<dbReference type="GO" id="GO:0005769">
    <property type="term" value="C:early endosome"/>
    <property type="evidence" value="ECO:0007669"/>
    <property type="project" value="UniProtKB-SubCell"/>
</dbReference>
<dbReference type="GO" id="GO:0005783">
    <property type="term" value="C:endoplasmic reticulum"/>
    <property type="evidence" value="ECO:0007669"/>
    <property type="project" value="UniProtKB-SubCell"/>
</dbReference>
<dbReference type="GO" id="GO:0005794">
    <property type="term" value="C:Golgi apparatus"/>
    <property type="evidence" value="ECO:0000250"/>
    <property type="project" value="UniProtKB"/>
</dbReference>
<dbReference type="GO" id="GO:0030027">
    <property type="term" value="C:lamellipodium"/>
    <property type="evidence" value="ECO:0000250"/>
    <property type="project" value="UniProtKB"/>
</dbReference>
<dbReference type="GO" id="GO:0005886">
    <property type="term" value="C:plasma membrane"/>
    <property type="evidence" value="ECO:0000314"/>
    <property type="project" value="HPA"/>
</dbReference>
<dbReference type="GO" id="GO:0001726">
    <property type="term" value="C:ruffle"/>
    <property type="evidence" value="ECO:0000250"/>
    <property type="project" value="UniProtKB"/>
</dbReference>
<dbReference type="GO" id="GO:0032587">
    <property type="term" value="C:ruffle membrane"/>
    <property type="evidence" value="ECO:0007669"/>
    <property type="project" value="UniProtKB-SubCell"/>
</dbReference>
<dbReference type="GO" id="GO:0005085">
    <property type="term" value="F:guanyl-nucleotide exchange factor activity"/>
    <property type="evidence" value="ECO:0000250"/>
    <property type="project" value="UniProtKB"/>
</dbReference>
<dbReference type="GO" id="GO:0031267">
    <property type="term" value="F:small GTPase binding"/>
    <property type="evidence" value="ECO:0000250"/>
    <property type="project" value="UniProtKB"/>
</dbReference>
<dbReference type="GO" id="GO:0008270">
    <property type="term" value="F:zinc ion binding"/>
    <property type="evidence" value="ECO:0007669"/>
    <property type="project" value="UniProtKB-KW"/>
</dbReference>
<dbReference type="GO" id="GO:0030036">
    <property type="term" value="P:actin cytoskeleton organization"/>
    <property type="evidence" value="ECO:0000250"/>
    <property type="project" value="UniProtKB"/>
</dbReference>
<dbReference type="GO" id="GO:0007010">
    <property type="term" value="P:cytoskeleton organization"/>
    <property type="evidence" value="ECO:0000250"/>
    <property type="project" value="UniProtKB"/>
</dbReference>
<dbReference type="GO" id="GO:0046847">
    <property type="term" value="P:filopodium assembly"/>
    <property type="evidence" value="ECO:0000250"/>
    <property type="project" value="UniProtKB"/>
</dbReference>
<dbReference type="GO" id="GO:0008360">
    <property type="term" value="P:regulation of cell shape"/>
    <property type="evidence" value="ECO:0000250"/>
    <property type="project" value="UniProtKB"/>
</dbReference>
<dbReference type="GO" id="GO:0043087">
    <property type="term" value="P:regulation of GTPase activity"/>
    <property type="evidence" value="ECO:0000250"/>
    <property type="project" value="UniProtKB"/>
</dbReference>
<dbReference type="GO" id="GO:0051056">
    <property type="term" value="P:regulation of small GTPase mediated signal transduction"/>
    <property type="evidence" value="ECO:0000304"/>
    <property type="project" value="Reactome"/>
</dbReference>
<dbReference type="CDD" id="cd15742">
    <property type="entry name" value="FYVE_FGD5"/>
    <property type="match status" value="1"/>
</dbReference>
<dbReference type="CDD" id="cd15792">
    <property type="entry name" value="PH1_FGD5"/>
    <property type="match status" value="1"/>
</dbReference>
<dbReference type="CDD" id="cd13237">
    <property type="entry name" value="PH2_FGD5_FGD6"/>
    <property type="match status" value="1"/>
</dbReference>
<dbReference type="CDD" id="cd00160">
    <property type="entry name" value="RhoGEF"/>
    <property type="match status" value="1"/>
</dbReference>
<dbReference type="FunFam" id="2.30.29.30:FF:000158">
    <property type="entry name" value="FYVE, RhoGEF and PH domain containing 6"/>
    <property type="match status" value="1"/>
</dbReference>
<dbReference type="FunFam" id="1.20.900.10:FF:000024">
    <property type="entry name" value="FYVE, RhoGEF and PH domain-containing protein 6"/>
    <property type="match status" value="1"/>
</dbReference>
<dbReference type="Gene3D" id="1.20.900.10">
    <property type="entry name" value="Dbl homology (DH) domain"/>
    <property type="match status" value="1"/>
</dbReference>
<dbReference type="Gene3D" id="2.30.29.30">
    <property type="entry name" value="Pleckstrin-homology domain (PH domain)/Phosphotyrosine-binding domain (PTB)"/>
    <property type="match status" value="2"/>
</dbReference>
<dbReference type="Gene3D" id="3.30.40.10">
    <property type="entry name" value="Zinc/RING finger domain, C3HC4 (zinc finger)"/>
    <property type="match status" value="1"/>
</dbReference>
<dbReference type="InterPro" id="IPR035899">
    <property type="entry name" value="DBL_dom_sf"/>
</dbReference>
<dbReference type="InterPro" id="IPR000219">
    <property type="entry name" value="DH_dom"/>
</dbReference>
<dbReference type="InterPro" id="IPR051092">
    <property type="entry name" value="FYVE_RhoGEF_PH"/>
</dbReference>
<dbReference type="InterPro" id="IPR011993">
    <property type="entry name" value="PH-like_dom_sf"/>
</dbReference>
<dbReference type="InterPro" id="IPR001849">
    <property type="entry name" value="PH_domain"/>
</dbReference>
<dbReference type="InterPro" id="IPR000306">
    <property type="entry name" value="Znf_FYVE"/>
</dbReference>
<dbReference type="InterPro" id="IPR017455">
    <property type="entry name" value="Znf_FYVE-rel"/>
</dbReference>
<dbReference type="InterPro" id="IPR013083">
    <property type="entry name" value="Znf_RING/FYVE/PHD"/>
</dbReference>
<dbReference type="PANTHER" id="PTHR12673">
    <property type="entry name" value="FACIOGENITAL DYSPLASIA PROTEIN"/>
    <property type="match status" value="1"/>
</dbReference>
<dbReference type="PANTHER" id="PTHR12673:SF13">
    <property type="entry name" value="FYVE, RHOGEF AND PH DOMAIN-CONTAINING PROTEIN 5"/>
    <property type="match status" value="1"/>
</dbReference>
<dbReference type="Pfam" id="PF01363">
    <property type="entry name" value="FYVE"/>
    <property type="match status" value="1"/>
</dbReference>
<dbReference type="Pfam" id="PF00169">
    <property type="entry name" value="PH"/>
    <property type="match status" value="2"/>
</dbReference>
<dbReference type="Pfam" id="PF00621">
    <property type="entry name" value="RhoGEF"/>
    <property type="match status" value="1"/>
</dbReference>
<dbReference type="SMART" id="SM00064">
    <property type="entry name" value="FYVE"/>
    <property type="match status" value="1"/>
</dbReference>
<dbReference type="SMART" id="SM00233">
    <property type="entry name" value="PH"/>
    <property type="match status" value="2"/>
</dbReference>
<dbReference type="SMART" id="SM00325">
    <property type="entry name" value="RhoGEF"/>
    <property type="match status" value="1"/>
</dbReference>
<dbReference type="SUPFAM" id="SSF48065">
    <property type="entry name" value="DBL homology domain (DH-domain)"/>
    <property type="match status" value="1"/>
</dbReference>
<dbReference type="SUPFAM" id="SSF50729">
    <property type="entry name" value="PH domain-like"/>
    <property type="match status" value="2"/>
</dbReference>
<dbReference type="PROSITE" id="PS50010">
    <property type="entry name" value="DH_2"/>
    <property type="match status" value="1"/>
</dbReference>
<dbReference type="PROSITE" id="PS50003">
    <property type="entry name" value="PH_DOMAIN"/>
    <property type="match status" value="2"/>
</dbReference>
<dbReference type="PROSITE" id="PS50178">
    <property type="entry name" value="ZF_FYVE"/>
    <property type="match status" value="1"/>
</dbReference>
<gene>
    <name type="primary">FGD5</name>
    <name type="synonym">ZFYVE23</name>
</gene>
<sequence length="1462" mass="159891">MFRGPKPPIAPKPRLTAPNEWRASVYLNDSLNKCSNGRLPCVDRGLDEGPRSIPKCSESETDEDYIVVPRVPLREDEPKDEGSVGNKALVSPESSAEEEEEREEGGEACGLEGTGAGEDSVAPAAPGAGALSREGEEGTDLALEDEGEGCADEPGTLEQVSRSEEEEKLVQPHRECSLEDSGPWAGEGVFQSDLLLPHIHGEDQEPPDTPGEAEEDDEEGCASTDPAGADEGSGPDRPTEDMGQDAEDTSEEPPEKEELAGVQEAETATDCPEVLEEGCEEATGVTGGEQVDLSEPPDHEKKTNQEVAAATLEDHAQDESAEESCQIVPFENDCMEDFVTSLTGSPYEFFPTESTSFCSESCSPLSESAKGLESEQAPKLGLRAEENPMVGALCGQCGSLQGGAAEGPAAPDVVVVLEEEALDDALANPYVMGVGLPGQAAPGEGGQAASDALGGYGSKEELNCEAEGGLVPADRKNTSTRVRPHSGKVAGYVPETVPEETGPEAGSSAPGIGGAAEEVGKTLLSLEGKPLEASRALPAKPRAFTLYPRSFSVEGREIPVSVYQEPEGSGLDDHRIKRKEDNLSLSCVIGSSGSFSQRNHLPSSGTSTPSSMVDIPPPFDLACITKKPITKSSPSLLIESDSPDKYKKKKSSFKRFLALTFKKKTENKLHVDVNVSSSRSSSESSYHGPSRILEVDRRSLSNSPQLKSRTGKLRASESPSSLIFYRDGKRKGVPFSRTVSRVESFEDRSRPPFLPLPLTKPRSISFPSADTSDYENIPAMNSDYENIQIPPRRPARAGAFTKLFEDQSRALSTANENDGYVDMSSFNAFESKQQSADQDAESAYTEPYKVCPISSAAPKEDLTSDEEQRSSEEEDSASRDPSVTHKVEGQSRALVIAQELLSSEKAYVEMLQHLNLDFHGAVMRALDDMDHEGRDTLAREELRQGLSELPAIHDLHQGILEELEERLSNWESQQKVADVFLAREQGFDHHATHILQFDRYLGLLSENCLHSPRLAAAVREFEQSVQGGSQTAKHRLLRVVQRLFQYQVLLTDYLNNLCPDSAEYDNTQGALSLISKVTDRANDSMEQGENLQKLVHIEHSVRGQGDLLQPGREFLKEGTLMKVTGKNRRPRHLFLMNDVLLYTYPQKDGKYRLKNTLAVANMKVSRPVMEKVPYALKIETSESCLMLSASSCAERDEWYGCLSRALPEDYKAQALAAFHHSVEIRERLGVSLGERPPTLVPVTHVMMCMNCGCDFSLTLRRHHCHACGKIVCRNCSRNKYPLKYLKDRMAKVCDGCFGELKKRGRAVPGLMRERPVSMSFPLSSPRFSGSAFSSVFQSINPSTFKKQKKVPSALTEVAASGEGSAISGYLSRCKRGKRHWKKLWFVIKGKVLYTYMASEDKVALESMPLLGFTIAPEKEEGSSEVGPIFHLYHKKTLFYSFKAEDTNSAQRWIEAMEDASVL</sequence>
<organism>
    <name type="scientific">Homo sapiens</name>
    <name type="common">Human</name>
    <dbReference type="NCBI Taxonomy" id="9606"/>
    <lineage>
        <taxon>Eukaryota</taxon>
        <taxon>Metazoa</taxon>
        <taxon>Chordata</taxon>
        <taxon>Craniata</taxon>
        <taxon>Vertebrata</taxon>
        <taxon>Euteleostomi</taxon>
        <taxon>Mammalia</taxon>
        <taxon>Eutheria</taxon>
        <taxon>Euarchontoglires</taxon>
        <taxon>Primates</taxon>
        <taxon>Haplorrhini</taxon>
        <taxon>Catarrhini</taxon>
        <taxon>Hominidae</taxon>
        <taxon>Homo</taxon>
    </lineage>
</organism>
<feature type="chain" id="PRO_0000080950" description="FYVE, RhoGEF and PH domain-containing protein 5">
    <location>
        <begin position="1"/>
        <end position="1462"/>
    </location>
</feature>
<feature type="domain" description="DH" evidence="1">
    <location>
        <begin position="892"/>
        <end position="1084"/>
    </location>
</feature>
<feature type="domain" description="PH 1" evidence="3">
    <location>
        <begin position="1113"/>
        <end position="1207"/>
    </location>
</feature>
<feature type="domain" description="PH 2" evidence="3">
    <location>
        <begin position="1363"/>
        <end position="1461"/>
    </location>
</feature>
<feature type="zinc finger region" description="FYVE-type" evidence="2">
    <location>
        <begin position="1242"/>
        <end position="1301"/>
    </location>
</feature>
<feature type="region of interest" description="Disordered" evidence="4">
    <location>
        <begin position="37"/>
        <end position="323"/>
    </location>
</feature>
<feature type="region of interest" description="Disordered" evidence="4">
    <location>
        <begin position="492"/>
        <end position="512"/>
    </location>
</feature>
<feature type="region of interest" description="Disordered" evidence="4">
    <location>
        <begin position="592"/>
        <end position="613"/>
    </location>
</feature>
<feature type="region of interest" description="Disordered" evidence="4">
    <location>
        <begin position="670"/>
        <end position="718"/>
    </location>
</feature>
<feature type="region of interest" description="Disordered" evidence="4">
    <location>
        <begin position="746"/>
        <end position="777"/>
    </location>
</feature>
<feature type="region of interest" description="Disordered" evidence="4">
    <location>
        <begin position="851"/>
        <end position="887"/>
    </location>
</feature>
<feature type="compositionally biased region" description="Basic and acidic residues" evidence="4">
    <location>
        <begin position="72"/>
        <end position="82"/>
    </location>
</feature>
<feature type="compositionally biased region" description="Acidic residues" evidence="4">
    <location>
        <begin position="95"/>
        <end position="106"/>
    </location>
</feature>
<feature type="compositionally biased region" description="Acidic residues" evidence="4">
    <location>
        <begin position="137"/>
        <end position="151"/>
    </location>
</feature>
<feature type="compositionally biased region" description="Basic and acidic residues" evidence="4">
    <location>
        <begin position="161"/>
        <end position="177"/>
    </location>
</feature>
<feature type="compositionally biased region" description="Acidic residues" evidence="4">
    <location>
        <begin position="211"/>
        <end position="220"/>
    </location>
</feature>
<feature type="compositionally biased region" description="Acidic residues" evidence="4">
    <location>
        <begin position="242"/>
        <end position="255"/>
    </location>
</feature>
<feature type="compositionally biased region" description="Polar residues" evidence="4">
    <location>
        <begin position="592"/>
        <end position="611"/>
    </location>
</feature>
<feature type="compositionally biased region" description="Low complexity" evidence="4">
    <location>
        <begin position="676"/>
        <end position="685"/>
    </location>
</feature>
<feature type="compositionally biased region" description="Basic and acidic residues" evidence="4">
    <location>
        <begin position="858"/>
        <end position="887"/>
    </location>
</feature>
<feature type="binding site" evidence="2">
    <location>
        <position position="1248"/>
    </location>
    <ligand>
        <name>Zn(2+)</name>
        <dbReference type="ChEBI" id="CHEBI:29105"/>
        <label>1</label>
    </ligand>
</feature>
<feature type="binding site" evidence="2">
    <location>
        <position position="1251"/>
    </location>
    <ligand>
        <name>Zn(2+)</name>
        <dbReference type="ChEBI" id="CHEBI:29105"/>
        <label>1</label>
    </ligand>
</feature>
<feature type="binding site" evidence="2">
    <location>
        <position position="1264"/>
    </location>
    <ligand>
        <name>Zn(2+)</name>
        <dbReference type="ChEBI" id="CHEBI:29105"/>
        <label>2</label>
    </ligand>
</feature>
<feature type="binding site" evidence="2">
    <location>
        <position position="1267"/>
    </location>
    <ligand>
        <name>Zn(2+)</name>
        <dbReference type="ChEBI" id="CHEBI:29105"/>
        <label>2</label>
    </ligand>
</feature>
<feature type="binding site" evidence="2">
    <location>
        <position position="1272"/>
    </location>
    <ligand>
        <name>Zn(2+)</name>
        <dbReference type="ChEBI" id="CHEBI:29105"/>
        <label>1</label>
    </ligand>
</feature>
<feature type="binding site" evidence="2">
    <location>
        <position position="1275"/>
    </location>
    <ligand>
        <name>Zn(2+)</name>
        <dbReference type="ChEBI" id="CHEBI:29105"/>
        <label>1</label>
    </ligand>
</feature>
<feature type="binding site" evidence="2">
    <location>
        <position position="1293"/>
    </location>
    <ligand>
        <name>Zn(2+)</name>
        <dbReference type="ChEBI" id="CHEBI:29105"/>
        <label>2</label>
    </ligand>
</feature>
<feature type="binding site" evidence="2">
    <location>
        <position position="1296"/>
    </location>
    <ligand>
        <name>Zn(2+)</name>
        <dbReference type="ChEBI" id="CHEBI:29105"/>
        <label>2</label>
    </ligand>
</feature>
<feature type="splice variant" id="VSP_013088" description="In isoform 2." evidence="6 7">
    <location>
        <begin position="1"/>
        <end position="922"/>
    </location>
</feature>
<feature type="sequence variant" id="VAR_059799" description="In dbSNP:rs7636593.">
    <original>G</original>
    <variation>R</variation>
    <location>
        <position position="403"/>
    </location>
</feature>
<feature type="sequence variant" id="VAR_059800" description="In dbSNP:rs17038795.">
    <original>A</original>
    <variation>T</variation>
    <location>
        <position position="828"/>
    </location>
</feature>
<feature type="sequence variant" id="VAR_059801" description="In dbSNP:rs2307092.">
    <original>E</original>
    <variation>K</variation>
    <location>
        <position position="941"/>
    </location>
</feature>
<feature type="sequence conflict" description="In Ref. 1; BAC85128." evidence="8" ref="1">
    <original>A</original>
    <variation>T</variation>
    <location>
        <position position="124"/>
    </location>
</feature>
<feature type="sequence conflict" description="In Ref. 1; BAC85128." evidence="8" ref="1">
    <original>A</original>
    <variation>G</variation>
    <location>
        <position position="213"/>
    </location>
</feature>
<feature type="sequence conflict" description="In Ref. 5; CAE45896." evidence="8" ref="5">
    <original>S</original>
    <variation>G</variation>
    <location>
        <position position="354"/>
    </location>
</feature>
<feature type="sequence conflict" description="In Ref. 1; BAC04989." evidence="8" ref="1">
    <original>H</original>
    <variation>Y</variation>
    <location>
        <position position="574"/>
    </location>
</feature>
<feature type="sequence conflict" description="In Ref. 5; CAE45896." evidence="8" ref="5">
    <original>R</original>
    <variation>M</variation>
    <location>
        <position position="1112"/>
    </location>
</feature>
<feature type="sequence conflict" description="In Ref. 5; CAE45896." evidence="8" ref="5">
    <original>D</original>
    <variation>N</variation>
    <location>
        <position position="1196"/>
    </location>
</feature>
<feature type="sequence conflict" description="In Ref. 5; CAE45896." evidence="8" ref="5">
    <original>M</original>
    <variation>T</variation>
    <location>
        <position position="1289"/>
    </location>
</feature>
<feature type="sequence conflict" description="In Ref. 1; BAC04989." evidence="8" ref="1">
    <original>K</original>
    <variation>E</variation>
    <location>
        <position position="1382"/>
    </location>
</feature>
<feature type="sequence conflict" description="In Ref. 5; CAD98090." evidence="8" ref="5">
    <original>D</original>
    <variation>G</variation>
    <location>
        <position position="1400"/>
    </location>
</feature>
<feature type="helix" evidence="9">
    <location>
        <begin position="891"/>
        <end position="917"/>
    </location>
</feature>
<feature type="helix" evidence="9">
    <location>
        <begin position="919"/>
        <end position="929"/>
    </location>
</feature>
<feature type="helix" evidence="9">
    <location>
        <begin position="936"/>
        <end position="968"/>
    </location>
</feature>
<feature type="turn" evidence="9">
    <location>
        <begin position="969"/>
        <end position="972"/>
    </location>
</feature>
<feature type="helix" evidence="9">
    <location>
        <begin position="978"/>
        <end position="981"/>
    </location>
</feature>
<feature type="turn" evidence="9">
    <location>
        <begin position="982"/>
        <end position="986"/>
    </location>
</feature>
<feature type="helix" evidence="9">
    <location>
        <begin position="987"/>
        <end position="1008"/>
    </location>
</feature>
<feature type="helix" evidence="9">
    <location>
        <begin position="1012"/>
        <end position="1022"/>
    </location>
</feature>
<feature type="helix" evidence="9">
    <location>
        <begin position="1032"/>
        <end position="1054"/>
    </location>
</feature>
<feature type="helix" evidence="9">
    <location>
        <begin position="1062"/>
        <end position="1084"/>
    </location>
</feature>
<feature type="helix" evidence="9">
    <location>
        <begin position="1088"/>
        <end position="1100"/>
    </location>
</feature>
<feature type="strand" evidence="9">
    <location>
        <begin position="1114"/>
        <end position="1116"/>
    </location>
</feature>
<feature type="strand" evidence="9">
    <location>
        <begin position="1119"/>
        <end position="1124"/>
    </location>
</feature>
<feature type="strand" evidence="9">
    <location>
        <begin position="1127"/>
        <end position="1145"/>
    </location>
</feature>
<feature type="strand" evidence="9">
    <location>
        <begin position="1151"/>
        <end position="1158"/>
    </location>
</feature>
<feature type="strand" evidence="9">
    <location>
        <begin position="1174"/>
        <end position="1179"/>
    </location>
</feature>
<feature type="strand" evidence="9">
    <location>
        <begin position="1184"/>
        <end position="1188"/>
    </location>
</feature>
<feature type="helix" evidence="9">
    <location>
        <begin position="1192"/>
        <end position="1204"/>
    </location>
</feature>
<reference key="1">
    <citation type="journal article" date="2004" name="Nat. Genet.">
        <title>Complete sequencing and characterization of 21,243 full-length human cDNAs.</title>
        <authorList>
            <person name="Ota T."/>
            <person name="Suzuki Y."/>
            <person name="Nishikawa T."/>
            <person name="Otsuki T."/>
            <person name="Sugiyama T."/>
            <person name="Irie R."/>
            <person name="Wakamatsu A."/>
            <person name="Hayashi K."/>
            <person name="Sato H."/>
            <person name="Nagai K."/>
            <person name="Kimura K."/>
            <person name="Makita H."/>
            <person name="Sekine M."/>
            <person name="Obayashi M."/>
            <person name="Nishi T."/>
            <person name="Shibahara T."/>
            <person name="Tanaka T."/>
            <person name="Ishii S."/>
            <person name="Yamamoto J."/>
            <person name="Saito K."/>
            <person name="Kawai Y."/>
            <person name="Isono Y."/>
            <person name="Nakamura Y."/>
            <person name="Nagahari K."/>
            <person name="Murakami K."/>
            <person name="Yasuda T."/>
            <person name="Iwayanagi T."/>
            <person name="Wagatsuma M."/>
            <person name="Shiratori A."/>
            <person name="Sudo H."/>
            <person name="Hosoiri T."/>
            <person name="Kaku Y."/>
            <person name="Kodaira H."/>
            <person name="Kondo H."/>
            <person name="Sugawara M."/>
            <person name="Takahashi M."/>
            <person name="Kanda K."/>
            <person name="Yokoi T."/>
            <person name="Furuya T."/>
            <person name="Kikkawa E."/>
            <person name="Omura Y."/>
            <person name="Abe K."/>
            <person name="Kamihara K."/>
            <person name="Katsuta N."/>
            <person name="Sato K."/>
            <person name="Tanikawa M."/>
            <person name="Yamazaki M."/>
            <person name="Ninomiya K."/>
            <person name="Ishibashi T."/>
            <person name="Yamashita H."/>
            <person name="Murakawa K."/>
            <person name="Fujimori K."/>
            <person name="Tanai H."/>
            <person name="Kimata M."/>
            <person name="Watanabe M."/>
            <person name="Hiraoka S."/>
            <person name="Chiba Y."/>
            <person name="Ishida S."/>
            <person name="Ono Y."/>
            <person name="Takiguchi S."/>
            <person name="Watanabe S."/>
            <person name="Yosida M."/>
            <person name="Hotuta T."/>
            <person name="Kusano J."/>
            <person name="Kanehori K."/>
            <person name="Takahashi-Fujii A."/>
            <person name="Hara H."/>
            <person name="Tanase T.-O."/>
            <person name="Nomura Y."/>
            <person name="Togiya S."/>
            <person name="Komai F."/>
            <person name="Hara R."/>
            <person name="Takeuchi K."/>
            <person name="Arita M."/>
            <person name="Imose N."/>
            <person name="Musashino K."/>
            <person name="Yuuki H."/>
            <person name="Oshima A."/>
            <person name="Sasaki N."/>
            <person name="Aotsuka S."/>
            <person name="Yoshikawa Y."/>
            <person name="Matsunawa H."/>
            <person name="Ichihara T."/>
            <person name="Shiohata N."/>
            <person name="Sano S."/>
            <person name="Moriya S."/>
            <person name="Momiyama H."/>
            <person name="Satoh N."/>
            <person name="Takami S."/>
            <person name="Terashima Y."/>
            <person name="Suzuki O."/>
            <person name="Nakagawa S."/>
            <person name="Senoh A."/>
            <person name="Mizoguchi H."/>
            <person name="Goto Y."/>
            <person name="Shimizu F."/>
            <person name="Wakebe H."/>
            <person name="Hishigaki H."/>
            <person name="Watanabe T."/>
            <person name="Sugiyama A."/>
            <person name="Takemoto M."/>
            <person name="Kawakami B."/>
            <person name="Yamazaki M."/>
            <person name="Watanabe K."/>
            <person name="Kumagai A."/>
            <person name="Itakura S."/>
            <person name="Fukuzumi Y."/>
            <person name="Fujimori Y."/>
            <person name="Komiyama M."/>
            <person name="Tashiro H."/>
            <person name="Tanigami A."/>
            <person name="Fujiwara T."/>
            <person name="Ono T."/>
            <person name="Yamada K."/>
            <person name="Fujii Y."/>
            <person name="Ozaki K."/>
            <person name="Hirao M."/>
            <person name="Ohmori Y."/>
            <person name="Kawabata A."/>
            <person name="Hikiji T."/>
            <person name="Kobatake N."/>
            <person name="Inagaki H."/>
            <person name="Ikema Y."/>
            <person name="Okamoto S."/>
            <person name="Okitani R."/>
            <person name="Kawakami T."/>
            <person name="Noguchi S."/>
            <person name="Itoh T."/>
            <person name="Shigeta K."/>
            <person name="Senba T."/>
            <person name="Matsumura K."/>
            <person name="Nakajima Y."/>
            <person name="Mizuno T."/>
            <person name="Morinaga M."/>
            <person name="Sasaki M."/>
            <person name="Togashi T."/>
            <person name="Oyama M."/>
            <person name="Hata H."/>
            <person name="Watanabe M."/>
            <person name="Komatsu T."/>
            <person name="Mizushima-Sugano J."/>
            <person name="Satoh T."/>
            <person name="Shirai Y."/>
            <person name="Takahashi Y."/>
            <person name="Nakagawa K."/>
            <person name="Okumura K."/>
            <person name="Nagase T."/>
            <person name="Nomura N."/>
            <person name="Kikuchi H."/>
            <person name="Masuho Y."/>
            <person name="Yamashita R."/>
            <person name="Nakai K."/>
            <person name="Yada T."/>
            <person name="Nakamura Y."/>
            <person name="Ohara O."/>
            <person name="Isogai T."/>
            <person name="Sugano S."/>
        </authorList>
    </citation>
    <scope>NUCLEOTIDE SEQUENCE [LARGE SCALE MRNA] (ISOFORM 2)</scope>
    <scope>NUCLEOTIDE SEQUENCE [LARGE SCALE MRNA] OF 77-1462 (ISOFORM 1)</scope>
    <source>
        <tissue>Spleen</tissue>
        <tissue>Testis</tissue>
    </source>
</reference>
<reference key="2">
    <citation type="journal article" date="2006" name="Nature">
        <title>The DNA sequence, annotation and analysis of human chromosome 3.</title>
        <authorList>
            <person name="Muzny D.M."/>
            <person name="Scherer S.E."/>
            <person name="Kaul R."/>
            <person name="Wang J."/>
            <person name="Yu J."/>
            <person name="Sudbrak R."/>
            <person name="Buhay C.J."/>
            <person name="Chen R."/>
            <person name="Cree A."/>
            <person name="Ding Y."/>
            <person name="Dugan-Rocha S."/>
            <person name="Gill R."/>
            <person name="Gunaratne P."/>
            <person name="Harris R.A."/>
            <person name="Hawes A.C."/>
            <person name="Hernandez J."/>
            <person name="Hodgson A.V."/>
            <person name="Hume J."/>
            <person name="Jackson A."/>
            <person name="Khan Z.M."/>
            <person name="Kovar-Smith C."/>
            <person name="Lewis L.R."/>
            <person name="Lozado R.J."/>
            <person name="Metzker M.L."/>
            <person name="Milosavljevic A."/>
            <person name="Miner G.R."/>
            <person name="Morgan M.B."/>
            <person name="Nazareth L.V."/>
            <person name="Scott G."/>
            <person name="Sodergren E."/>
            <person name="Song X.-Z."/>
            <person name="Steffen D."/>
            <person name="Wei S."/>
            <person name="Wheeler D.A."/>
            <person name="Wright M.W."/>
            <person name="Worley K.C."/>
            <person name="Yuan Y."/>
            <person name="Zhang Z."/>
            <person name="Adams C.Q."/>
            <person name="Ansari-Lari M.A."/>
            <person name="Ayele M."/>
            <person name="Brown M.J."/>
            <person name="Chen G."/>
            <person name="Chen Z."/>
            <person name="Clendenning J."/>
            <person name="Clerc-Blankenburg K.P."/>
            <person name="Chen R."/>
            <person name="Chen Z."/>
            <person name="Davis C."/>
            <person name="Delgado O."/>
            <person name="Dinh H.H."/>
            <person name="Dong W."/>
            <person name="Draper H."/>
            <person name="Ernst S."/>
            <person name="Fu G."/>
            <person name="Gonzalez-Garay M.L."/>
            <person name="Garcia D.K."/>
            <person name="Gillett W."/>
            <person name="Gu J."/>
            <person name="Hao B."/>
            <person name="Haugen E."/>
            <person name="Havlak P."/>
            <person name="He X."/>
            <person name="Hennig S."/>
            <person name="Hu S."/>
            <person name="Huang W."/>
            <person name="Jackson L.R."/>
            <person name="Jacob L.S."/>
            <person name="Kelly S.H."/>
            <person name="Kube M."/>
            <person name="Levy R."/>
            <person name="Li Z."/>
            <person name="Liu B."/>
            <person name="Liu J."/>
            <person name="Liu W."/>
            <person name="Lu J."/>
            <person name="Maheshwari M."/>
            <person name="Nguyen B.-V."/>
            <person name="Okwuonu G.O."/>
            <person name="Palmeiri A."/>
            <person name="Pasternak S."/>
            <person name="Perez L.M."/>
            <person name="Phelps K.A."/>
            <person name="Plopper F.J."/>
            <person name="Qiang B."/>
            <person name="Raymond C."/>
            <person name="Rodriguez R."/>
            <person name="Saenphimmachak C."/>
            <person name="Santibanez J."/>
            <person name="Shen H."/>
            <person name="Shen Y."/>
            <person name="Subramanian S."/>
            <person name="Tabor P.E."/>
            <person name="Verduzco D."/>
            <person name="Waldron L."/>
            <person name="Wang J."/>
            <person name="Wang J."/>
            <person name="Wang Q."/>
            <person name="Williams G.A."/>
            <person name="Wong G.K.-S."/>
            <person name="Yao Z."/>
            <person name="Zhang J."/>
            <person name="Zhang X."/>
            <person name="Zhao G."/>
            <person name="Zhou J."/>
            <person name="Zhou Y."/>
            <person name="Nelson D."/>
            <person name="Lehrach H."/>
            <person name="Reinhardt R."/>
            <person name="Naylor S.L."/>
            <person name="Yang H."/>
            <person name="Olson M."/>
            <person name="Weinstock G."/>
            <person name="Gibbs R.A."/>
        </authorList>
    </citation>
    <scope>NUCLEOTIDE SEQUENCE [LARGE SCALE GENOMIC DNA]</scope>
</reference>
<reference key="3">
    <citation type="journal article" date="2004" name="Genome Res.">
        <title>The status, quality, and expansion of the NIH full-length cDNA project: the Mammalian Gene Collection (MGC).</title>
        <authorList>
            <consortium name="The MGC Project Team"/>
        </authorList>
    </citation>
    <scope>NUCLEOTIDE SEQUENCE [LARGE SCALE MRNA] (ISOFORM 2)</scope>
    <source>
        <tissue>Brain</tissue>
    </source>
</reference>
<reference key="4">
    <citation type="journal article" date="2000" name="Proc. Natl. Acad. Sci. U.S.A.">
        <title>Shotgun sequencing of the human transcriptome with ORF expressed sequence tags.</title>
        <authorList>
            <person name="Dias Neto E."/>
            <person name="Correa R.G."/>
            <person name="Verjovski-Almeida S."/>
            <person name="Briones M.R.S."/>
            <person name="Nagai M.A."/>
            <person name="da Silva W. Jr."/>
            <person name="Zago M.A."/>
            <person name="Bordin S."/>
            <person name="Costa F.F."/>
            <person name="Goldman G.H."/>
            <person name="Carvalho A.F."/>
            <person name="Matsukuma A."/>
            <person name="Baia G.S."/>
            <person name="Simpson D.H."/>
            <person name="Brunstein A."/>
            <person name="de Oliveira P.S.L."/>
            <person name="Bucher P."/>
            <person name="Jongeneel C.V."/>
            <person name="O'Hare M.J."/>
            <person name="Soares F."/>
            <person name="Brentani R.R."/>
            <person name="Reis L.F.L."/>
            <person name="de Souza S.J."/>
            <person name="Simpson A.J.G."/>
        </authorList>
    </citation>
    <scope>NUCLEOTIDE SEQUENCE [LARGE SCALE MRNA] OF 1-215 (ISOFORM 1)</scope>
    <source>
        <tissue>Placenta</tissue>
    </source>
</reference>
<reference key="5">
    <citation type="journal article" date="2007" name="BMC Genomics">
        <title>The full-ORF clone resource of the German cDNA consortium.</title>
        <authorList>
            <person name="Bechtel S."/>
            <person name="Rosenfelder H."/>
            <person name="Duda A."/>
            <person name="Schmidt C.P."/>
            <person name="Ernst U."/>
            <person name="Wellenreuther R."/>
            <person name="Mehrle A."/>
            <person name="Schuster C."/>
            <person name="Bahr A."/>
            <person name="Bloecker H."/>
            <person name="Heubner D."/>
            <person name="Hoerlein A."/>
            <person name="Michel G."/>
            <person name="Wedler H."/>
            <person name="Koehrer K."/>
            <person name="Ottenwaelder B."/>
            <person name="Poustka A."/>
            <person name="Wiemann S."/>
            <person name="Schupp I."/>
        </authorList>
    </citation>
    <scope>NUCLEOTIDE SEQUENCE [LARGE SCALE MRNA] OF 318-1462 (ISOFORM 1)</scope>
    <source>
        <tissue>Esophageal carcinoma</tissue>
        <tissue>Uterus</tissue>
    </source>
</reference>
<reference key="6">
    <citation type="journal article" date="2012" name="Arterioscler. Thromb. Vasc. Biol.">
        <title>FGD5 mediates proangiogenic action of vascular endothelial growth factor in human vascular endothelial cells.</title>
        <authorList>
            <person name="Kurogane Y."/>
            <person name="Miyata M."/>
            <person name="Kubo Y."/>
            <person name="Nagamatsu Y."/>
            <person name="Kundu R.K."/>
            <person name="Uemura A."/>
            <person name="Ishida T."/>
            <person name="Quertermous T."/>
            <person name="Hirata K."/>
            <person name="Rikitake Y."/>
        </authorList>
    </citation>
    <scope>FUNCTION</scope>
    <scope>SUBCELLULAR LOCATION</scope>
    <scope>TISSUE SPECIFICITY</scope>
</reference>
<reference key="7">
    <citation type="submission" date="2010-06" db="PDB data bank">
        <title>Crystal structure of the DH and PH-1 domains of human FGD5.</title>
        <authorList>
            <consortium name="Structural genomics consortium (SGC)"/>
        </authorList>
    </citation>
    <scope>X-RAY CRYSTALLOGRAPHY (2.8 ANGSTROMS) OF 889-1304</scope>
</reference>